<proteinExistence type="inferred from homology"/>
<gene>
    <name evidence="1" type="primary">pckG</name>
    <name type="ordered locus">Franean1_0833</name>
</gene>
<comment type="function">
    <text evidence="1">Catalyzes the conversion of oxaloacetate (OAA) to phosphoenolpyruvate (PEP), the rate-limiting step in the metabolic pathway that produces glucose from lactate and other precursors derived from the citric acid cycle.</text>
</comment>
<comment type="catalytic activity">
    <reaction evidence="1">
        <text>oxaloacetate + GTP = phosphoenolpyruvate + GDP + CO2</text>
        <dbReference type="Rhea" id="RHEA:10388"/>
        <dbReference type="ChEBI" id="CHEBI:16452"/>
        <dbReference type="ChEBI" id="CHEBI:16526"/>
        <dbReference type="ChEBI" id="CHEBI:37565"/>
        <dbReference type="ChEBI" id="CHEBI:58189"/>
        <dbReference type="ChEBI" id="CHEBI:58702"/>
        <dbReference type="EC" id="4.1.1.32"/>
    </reaction>
</comment>
<comment type="cofactor">
    <cofactor evidence="1">
        <name>Mn(2+)</name>
        <dbReference type="ChEBI" id="CHEBI:29035"/>
    </cofactor>
    <text evidence="1">Binds 1 Mn(2+) ion per subunit.</text>
</comment>
<comment type="pathway">
    <text evidence="1">Carbohydrate biosynthesis; gluconeogenesis.</text>
</comment>
<comment type="subunit">
    <text evidence="1">Monomer.</text>
</comment>
<comment type="subcellular location">
    <subcellularLocation>
        <location evidence="1">Cytoplasm</location>
    </subcellularLocation>
</comment>
<comment type="similarity">
    <text evidence="1">Belongs to the phosphoenolpyruvate carboxykinase [GTP] family.</text>
</comment>
<organism>
    <name type="scientific">Parafrankia sp. (strain EAN1pec)</name>
    <dbReference type="NCBI Taxonomy" id="298653"/>
    <lineage>
        <taxon>Bacteria</taxon>
        <taxon>Bacillati</taxon>
        <taxon>Actinomycetota</taxon>
        <taxon>Actinomycetes</taxon>
        <taxon>Frankiales</taxon>
        <taxon>Frankiaceae</taxon>
        <taxon>Parafrankia</taxon>
    </lineage>
</organism>
<name>PCKG_PARS2</name>
<dbReference type="EC" id="4.1.1.32" evidence="1"/>
<dbReference type="EMBL" id="CP000820">
    <property type="protein sequence ID" value="ABW10291.1"/>
    <property type="molecule type" value="Genomic_DNA"/>
</dbReference>
<dbReference type="RefSeq" id="WP_020458483.1">
    <property type="nucleotide sequence ID" value="NC_009921.1"/>
</dbReference>
<dbReference type="SMR" id="A8L175"/>
<dbReference type="STRING" id="298653.Franean1_0833"/>
<dbReference type="KEGG" id="fre:Franean1_0833"/>
<dbReference type="eggNOG" id="COG1274">
    <property type="taxonomic scope" value="Bacteria"/>
</dbReference>
<dbReference type="HOGENOM" id="CLU_028872_1_1_11"/>
<dbReference type="UniPathway" id="UPA00138"/>
<dbReference type="GO" id="GO:0005829">
    <property type="term" value="C:cytosol"/>
    <property type="evidence" value="ECO:0007669"/>
    <property type="project" value="TreeGrafter"/>
</dbReference>
<dbReference type="GO" id="GO:0005525">
    <property type="term" value="F:GTP binding"/>
    <property type="evidence" value="ECO:0007669"/>
    <property type="project" value="UniProtKB-UniRule"/>
</dbReference>
<dbReference type="GO" id="GO:0030145">
    <property type="term" value="F:manganese ion binding"/>
    <property type="evidence" value="ECO:0007669"/>
    <property type="project" value="UniProtKB-UniRule"/>
</dbReference>
<dbReference type="GO" id="GO:0004613">
    <property type="term" value="F:phosphoenolpyruvate carboxykinase (GTP) activity"/>
    <property type="evidence" value="ECO:0007669"/>
    <property type="project" value="UniProtKB-UniRule"/>
</dbReference>
<dbReference type="GO" id="GO:0071333">
    <property type="term" value="P:cellular response to glucose stimulus"/>
    <property type="evidence" value="ECO:0007669"/>
    <property type="project" value="TreeGrafter"/>
</dbReference>
<dbReference type="GO" id="GO:0006094">
    <property type="term" value="P:gluconeogenesis"/>
    <property type="evidence" value="ECO:0007669"/>
    <property type="project" value="UniProtKB-UniRule"/>
</dbReference>
<dbReference type="GO" id="GO:0046327">
    <property type="term" value="P:glycerol biosynthetic process from pyruvate"/>
    <property type="evidence" value="ECO:0007669"/>
    <property type="project" value="TreeGrafter"/>
</dbReference>
<dbReference type="GO" id="GO:0006107">
    <property type="term" value="P:oxaloacetate metabolic process"/>
    <property type="evidence" value="ECO:0007669"/>
    <property type="project" value="TreeGrafter"/>
</dbReference>
<dbReference type="GO" id="GO:0019543">
    <property type="term" value="P:propionate catabolic process"/>
    <property type="evidence" value="ECO:0007669"/>
    <property type="project" value="TreeGrafter"/>
</dbReference>
<dbReference type="GO" id="GO:0033993">
    <property type="term" value="P:response to lipid"/>
    <property type="evidence" value="ECO:0007669"/>
    <property type="project" value="TreeGrafter"/>
</dbReference>
<dbReference type="GO" id="GO:0042594">
    <property type="term" value="P:response to starvation"/>
    <property type="evidence" value="ECO:0007669"/>
    <property type="project" value="TreeGrafter"/>
</dbReference>
<dbReference type="CDD" id="cd00819">
    <property type="entry name" value="PEPCK_GTP"/>
    <property type="match status" value="1"/>
</dbReference>
<dbReference type="FunFam" id="3.40.449.10:FF:000005">
    <property type="entry name" value="Phosphoenolpyruvate carboxykinase [GTP]"/>
    <property type="match status" value="1"/>
</dbReference>
<dbReference type="Gene3D" id="3.90.228.20">
    <property type="match status" value="1"/>
</dbReference>
<dbReference type="Gene3D" id="3.40.449.10">
    <property type="entry name" value="Phosphoenolpyruvate Carboxykinase, domain 1"/>
    <property type="match status" value="1"/>
</dbReference>
<dbReference type="Gene3D" id="2.170.8.10">
    <property type="entry name" value="Phosphoenolpyruvate Carboxykinase, domain 2"/>
    <property type="match status" value="1"/>
</dbReference>
<dbReference type="HAMAP" id="MF_00452">
    <property type="entry name" value="PEPCK_GTP"/>
    <property type="match status" value="1"/>
</dbReference>
<dbReference type="InterPro" id="IPR018091">
    <property type="entry name" value="PEP_carboxykin_GTP_CS"/>
</dbReference>
<dbReference type="InterPro" id="IPR013035">
    <property type="entry name" value="PEP_carboxykinase_C"/>
</dbReference>
<dbReference type="InterPro" id="IPR008209">
    <property type="entry name" value="PEP_carboxykinase_GTP"/>
</dbReference>
<dbReference type="InterPro" id="IPR035077">
    <property type="entry name" value="PEP_carboxykinase_GTP_C"/>
</dbReference>
<dbReference type="InterPro" id="IPR035078">
    <property type="entry name" value="PEP_carboxykinase_GTP_N"/>
</dbReference>
<dbReference type="InterPro" id="IPR008210">
    <property type="entry name" value="PEP_carboxykinase_N"/>
</dbReference>
<dbReference type="NCBIfam" id="NF003253">
    <property type="entry name" value="PRK04210.1"/>
    <property type="match status" value="1"/>
</dbReference>
<dbReference type="PANTHER" id="PTHR11561">
    <property type="entry name" value="PHOSPHOENOLPYRUVATE CARBOXYKINASE"/>
    <property type="match status" value="1"/>
</dbReference>
<dbReference type="PANTHER" id="PTHR11561:SF0">
    <property type="entry name" value="PHOSPHOENOLPYRUVATE CARBOXYKINASE [GTP]-RELATED"/>
    <property type="match status" value="1"/>
</dbReference>
<dbReference type="Pfam" id="PF00821">
    <property type="entry name" value="PEPCK_GTP"/>
    <property type="match status" value="1"/>
</dbReference>
<dbReference type="Pfam" id="PF17297">
    <property type="entry name" value="PEPCK_N"/>
    <property type="match status" value="1"/>
</dbReference>
<dbReference type="PIRSF" id="PIRSF001348">
    <property type="entry name" value="PEP_carboxykinase_GTP"/>
    <property type="match status" value="1"/>
</dbReference>
<dbReference type="SUPFAM" id="SSF68923">
    <property type="entry name" value="PEP carboxykinase N-terminal domain"/>
    <property type="match status" value="1"/>
</dbReference>
<dbReference type="SUPFAM" id="SSF53795">
    <property type="entry name" value="PEP carboxykinase-like"/>
    <property type="match status" value="1"/>
</dbReference>
<dbReference type="PROSITE" id="PS00505">
    <property type="entry name" value="PEPCK_GTP"/>
    <property type="match status" value="1"/>
</dbReference>
<feature type="chain" id="PRO_1000125045" description="Phosphoenolpyruvate carboxykinase [GTP]">
    <location>
        <begin position="1"/>
        <end position="607"/>
    </location>
</feature>
<feature type="active site" evidence="1">
    <location>
        <position position="274"/>
    </location>
</feature>
<feature type="binding site" evidence="1">
    <location>
        <position position="82"/>
    </location>
    <ligand>
        <name>substrate</name>
    </ligand>
</feature>
<feature type="binding site" evidence="1">
    <location>
        <begin position="221"/>
        <end position="223"/>
    </location>
    <ligand>
        <name>substrate</name>
    </ligand>
</feature>
<feature type="binding site" evidence="1">
    <location>
        <position position="230"/>
    </location>
    <ligand>
        <name>Mn(2+)</name>
        <dbReference type="ChEBI" id="CHEBI:29035"/>
    </ligand>
</feature>
<feature type="binding site" evidence="1">
    <location>
        <position position="250"/>
    </location>
    <ligand>
        <name>Mn(2+)</name>
        <dbReference type="ChEBI" id="CHEBI:29035"/>
    </ligand>
</feature>
<feature type="binding site" evidence="1">
    <location>
        <position position="272"/>
    </location>
    <ligand>
        <name>substrate</name>
    </ligand>
</feature>
<feature type="binding site" evidence="1">
    <location>
        <begin position="273"/>
        <end position="278"/>
    </location>
    <ligand>
        <name>GTP</name>
        <dbReference type="ChEBI" id="CHEBI:37565"/>
    </ligand>
</feature>
<feature type="binding site" evidence="1">
    <location>
        <position position="297"/>
    </location>
    <ligand>
        <name>Mn(2+)</name>
        <dbReference type="ChEBI" id="CHEBI:29035"/>
    </ligand>
</feature>
<feature type="binding site" evidence="1">
    <location>
        <begin position="387"/>
        <end position="389"/>
    </location>
    <ligand>
        <name>substrate</name>
    </ligand>
</feature>
<feature type="binding site" evidence="1">
    <location>
        <position position="389"/>
    </location>
    <ligand>
        <name>GTP</name>
        <dbReference type="ChEBI" id="CHEBI:37565"/>
    </ligand>
</feature>
<feature type="binding site" evidence="1">
    <location>
        <position position="420"/>
    </location>
    <ligand>
        <name>GTP</name>
        <dbReference type="ChEBI" id="CHEBI:37565"/>
    </ligand>
</feature>
<feature type="binding site" evidence="1">
    <location>
        <begin position="515"/>
        <end position="518"/>
    </location>
    <ligand>
        <name>GTP</name>
        <dbReference type="ChEBI" id="CHEBI:37565"/>
    </ligand>
</feature>
<keyword id="KW-0963">Cytoplasm</keyword>
<keyword id="KW-0210">Decarboxylase</keyword>
<keyword id="KW-0312">Gluconeogenesis</keyword>
<keyword id="KW-0342">GTP-binding</keyword>
<keyword id="KW-0456">Lyase</keyword>
<keyword id="KW-0464">Manganese</keyword>
<keyword id="KW-0479">Metal-binding</keyword>
<keyword id="KW-0547">Nucleotide-binding</keyword>
<sequence>MTTAAQIPGLDAAPTKHARLLAWVREIAELTQPDRIEWCDGSESEFDRLTSLLIDKGTLVQLDDEKRPNSFYAASDPSDVARVEDRTYICSEKAEDAGPTNNWLDPAEMRTKLGKLFSGCMRGRTMYVVPFCMGPLGSHISALGVEITDSPYVVISMRTMTRMGTPALDQLGDDGFFVPAVHSLGAPLEPGATDVPWPCNSTKYITHFPETREIWSYGSGYGGNALLGKKCYALRIASVMARDQGWLAEHMLILKLTSPAGKVHFIAAAFPSACGKTNLAMLIPTLPGWKAETVGDDIAWMRFGDDGRLYAVNPEAGLFGVAPGTGEETNPNAVKTLWGNAVFTNVARTDDGDVWWEGLTPDKPAHLIDWKGRDWTPDSTEPAAHPNARFTVPASQCPTMAPEWENPAGVPISAILFGGRRATAVPLVTEAPDWQRGVFFGSIVSSETTAAAAGAIGKLRRDPFAMLPFCGYNMADYFAHWLEIGNKADPDKLPRIYYVNWFRKSPEGRYLWPGFGENSRVLAWVASRLDGEAKGTETPLGILPAPGELPTEGLDVSEADLETLLSVDTEVWRQEAELIPEHYNTFGDRLPAQLWAEHEALTKRLNG</sequence>
<accession>A8L175</accession>
<reference key="1">
    <citation type="journal article" date="2007" name="Genome Res.">
        <title>Genome characteristics of facultatively symbiotic Frankia sp. strains reflect host range and host plant biogeography.</title>
        <authorList>
            <person name="Normand P."/>
            <person name="Lapierre P."/>
            <person name="Tisa L.S."/>
            <person name="Gogarten J.P."/>
            <person name="Alloisio N."/>
            <person name="Bagnarol E."/>
            <person name="Bassi C.A."/>
            <person name="Berry A.M."/>
            <person name="Bickhart D.M."/>
            <person name="Choisne N."/>
            <person name="Couloux A."/>
            <person name="Cournoyer B."/>
            <person name="Cruveiller S."/>
            <person name="Daubin V."/>
            <person name="Demange N."/>
            <person name="Francino M.P."/>
            <person name="Goltsman E."/>
            <person name="Huang Y."/>
            <person name="Kopp O.R."/>
            <person name="Labarre L."/>
            <person name="Lapidus A."/>
            <person name="Lavire C."/>
            <person name="Marechal J."/>
            <person name="Martinez M."/>
            <person name="Mastronunzio J.E."/>
            <person name="Mullin B.C."/>
            <person name="Niemann J."/>
            <person name="Pujic P."/>
            <person name="Rawnsley T."/>
            <person name="Rouy Z."/>
            <person name="Schenowitz C."/>
            <person name="Sellstedt A."/>
            <person name="Tavares F."/>
            <person name="Tomkins J.P."/>
            <person name="Vallenet D."/>
            <person name="Valverde C."/>
            <person name="Wall L.G."/>
            <person name="Wang Y."/>
            <person name="Medigue C."/>
            <person name="Benson D.R."/>
        </authorList>
    </citation>
    <scope>NUCLEOTIDE SEQUENCE [LARGE SCALE GENOMIC DNA]</scope>
    <source>
        <strain>EAN1pec</strain>
    </source>
</reference>
<evidence type="ECO:0000255" key="1">
    <source>
        <dbReference type="HAMAP-Rule" id="MF_00452"/>
    </source>
</evidence>
<protein>
    <recommendedName>
        <fullName evidence="1">Phosphoenolpyruvate carboxykinase [GTP]</fullName>
        <shortName evidence="1">PEP carboxykinase</shortName>
        <shortName evidence="1">PEPCK</shortName>
        <ecNumber evidence="1">4.1.1.32</ecNumber>
    </recommendedName>
</protein>